<comment type="function">
    <text evidence="1">Binds to 23S rRNA. Forms part of two intersubunit bridges in the 70S ribosome.</text>
</comment>
<comment type="subunit">
    <text evidence="1">Part of the 50S ribosomal subunit. Forms a cluster with proteins L3 and L19. In the 70S ribosome, L14 and L19 interact and together make contacts with the 16S rRNA in bridges B5 and B8.</text>
</comment>
<comment type="similarity">
    <text evidence="1">Belongs to the universal ribosomal protein uL14 family.</text>
</comment>
<gene>
    <name evidence="1" type="primary">rplN</name>
    <name type="ordered locus">ASA_4077</name>
</gene>
<dbReference type="EMBL" id="CP000644">
    <property type="protein sequence ID" value="ABO92018.1"/>
    <property type="molecule type" value="Genomic_DNA"/>
</dbReference>
<dbReference type="RefSeq" id="WP_005307975.1">
    <property type="nucleotide sequence ID" value="NC_009348.1"/>
</dbReference>
<dbReference type="SMR" id="A4SSZ6"/>
<dbReference type="STRING" id="29491.GCA_000820065_03475"/>
<dbReference type="GeneID" id="97858404"/>
<dbReference type="KEGG" id="asa:ASA_4077"/>
<dbReference type="eggNOG" id="COG0093">
    <property type="taxonomic scope" value="Bacteria"/>
</dbReference>
<dbReference type="HOGENOM" id="CLU_095071_2_1_6"/>
<dbReference type="Proteomes" id="UP000000225">
    <property type="component" value="Chromosome"/>
</dbReference>
<dbReference type="GO" id="GO:0022625">
    <property type="term" value="C:cytosolic large ribosomal subunit"/>
    <property type="evidence" value="ECO:0007669"/>
    <property type="project" value="TreeGrafter"/>
</dbReference>
<dbReference type="GO" id="GO:0070180">
    <property type="term" value="F:large ribosomal subunit rRNA binding"/>
    <property type="evidence" value="ECO:0007669"/>
    <property type="project" value="TreeGrafter"/>
</dbReference>
<dbReference type="GO" id="GO:0003735">
    <property type="term" value="F:structural constituent of ribosome"/>
    <property type="evidence" value="ECO:0007669"/>
    <property type="project" value="InterPro"/>
</dbReference>
<dbReference type="GO" id="GO:0006412">
    <property type="term" value="P:translation"/>
    <property type="evidence" value="ECO:0007669"/>
    <property type="project" value="UniProtKB-UniRule"/>
</dbReference>
<dbReference type="CDD" id="cd00337">
    <property type="entry name" value="Ribosomal_uL14"/>
    <property type="match status" value="1"/>
</dbReference>
<dbReference type="FunFam" id="2.40.150.20:FF:000001">
    <property type="entry name" value="50S ribosomal protein L14"/>
    <property type="match status" value="1"/>
</dbReference>
<dbReference type="Gene3D" id="2.40.150.20">
    <property type="entry name" value="Ribosomal protein L14"/>
    <property type="match status" value="1"/>
</dbReference>
<dbReference type="HAMAP" id="MF_01367">
    <property type="entry name" value="Ribosomal_uL14"/>
    <property type="match status" value="1"/>
</dbReference>
<dbReference type="InterPro" id="IPR000218">
    <property type="entry name" value="Ribosomal_uL14"/>
</dbReference>
<dbReference type="InterPro" id="IPR005745">
    <property type="entry name" value="Ribosomal_uL14_bac-type"/>
</dbReference>
<dbReference type="InterPro" id="IPR019972">
    <property type="entry name" value="Ribosomal_uL14_CS"/>
</dbReference>
<dbReference type="InterPro" id="IPR036853">
    <property type="entry name" value="Ribosomal_uL14_sf"/>
</dbReference>
<dbReference type="NCBIfam" id="TIGR01067">
    <property type="entry name" value="rplN_bact"/>
    <property type="match status" value="1"/>
</dbReference>
<dbReference type="PANTHER" id="PTHR11761">
    <property type="entry name" value="50S/60S RIBOSOMAL PROTEIN L14/L23"/>
    <property type="match status" value="1"/>
</dbReference>
<dbReference type="PANTHER" id="PTHR11761:SF3">
    <property type="entry name" value="LARGE RIBOSOMAL SUBUNIT PROTEIN UL14M"/>
    <property type="match status" value="1"/>
</dbReference>
<dbReference type="Pfam" id="PF00238">
    <property type="entry name" value="Ribosomal_L14"/>
    <property type="match status" value="1"/>
</dbReference>
<dbReference type="SMART" id="SM01374">
    <property type="entry name" value="Ribosomal_L14"/>
    <property type="match status" value="1"/>
</dbReference>
<dbReference type="SUPFAM" id="SSF50193">
    <property type="entry name" value="Ribosomal protein L14"/>
    <property type="match status" value="1"/>
</dbReference>
<dbReference type="PROSITE" id="PS00049">
    <property type="entry name" value="RIBOSOMAL_L14"/>
    <property type="match status" value="1"/>
</dbReference>
<protein>
    <recommendedName>
        <fullName evidence="1">Large ribosomal subunit protein uL14</fullName>
    </recommendedName>
    <alternativeName>
        <fullName evidence="2">50S ribosomal protein L14</fullName>
    </alternativeName>
</protein>
<proteinExistence type="inferred from homology"/>
<reference key="1">
    <citation type="journal article" date="2008" name="BMC Genomics">
        <title>The genome of Aeromonas salmonicida subsp. salmonicida A449: insights into the evolution of a fish pathogen.</title>
        <authorList>
            <person name="Reith M.E."/>
            <person name="Singh R.K."/>
            <person name="Curtis B."/>
            <person name="Boyd J.M."/>
            <person name="Bouevitch A."/>
            <person name="Kimball J."/>
            <person name="Munholland J."/>
            <person name="Murphy C."/>
            <person name="Sarty D."/>
            <person name="Williams J."/>
            <person name="Nash J.H."/>
            <person name="Johnson S.C."/>
            <person name="Brown L.L."/>
        </authorList>
    </citation>
    <scope>NUCLEOTIDE SEQUENCE [LARGE SCALE GENOMIC DNA]</scope>
    <source>
        <strain>A449</strain>
    </source>
</reference>
<name>RL14_AERS4</name>
<feature type="chain" id="PRO_1000055501" description="Large ribosomal subunit protein uL14">
    <location>
        <begin position="1"/>
        <end position="122"/>
    </location>
</feature>
<accession>A4SSZ6</accession>
<sequence length="122" mass="13403">MIQMQSMLGVADNSGARSVMCIKVLGGSHRRYAGIGDIIKVSIKEAIPRGKVKKGDVYNAVVVRTRKGVRRPDGSVIRFDNNAAVLLNNNQQPIGTRIFGPVTRELRNEKFMKIVSLAPEVL</sequence>
<organism>
    <name type="scientific">Aeromonas salmonicida (strain A449)</name>
    <dbReference type="NCBI Taxonomy" id="382245"/>
    <lineage>
        <taxon>Bacteria</taxon>
        <taxon>Pseudomonadati</taxon>
        <taxon>Pseudomonadota</taxon>
        <taxon>Gammaproteobacteria</taxon>
        <taxon>Aeromonadales</taxon>
        <taxon>Aeromonadaceae</taxon>
        <taxon>Aeromonas</taxon>
    </lineage>
</organism>
<evidence type="ECO:0000255" key="1">
    <source>
        <dbReference type="HAMAP-Rule" id="MF_01367"/>
    </source>
</evidence>
<evidence type="ECO:0000305" key="2"/>
<keyword id="KW-0687">Ribonucleoprotein</keyword>
<keyword id="KW-0689">Ribosomal protein</keyword>
<keyword id="KW-0694">RNA-binding</keyword>
<keyword id="KW-0699">rRNA-binding</keyword>